<protein>
    <recommendedName>
        <fullName evidence="1">Endoribonuclease YbeY</fullName>
        <ecNumber evidence="1">3.1.-.-</ecNumber>
    </recommendedName>
</protein>
<keyword id="KW-0963">Cytoplasm</keyword>
<keyword id="KW-0255">Endonuclease</keyword>
<keyword id="KW-0378">Hydrolase</keyword>
<keyword id="KW-0479">Metal-binding</keyword>
<keyword id="KW-0540">Nuclease</keyword>
<keyword id="KW-1185">Reference proteome</keyword>
<keyword id="KW-0690">Ribosome biogenesis</keyword>
<keyword id="KW-0698">rRNA processing</keyword>
<keyword id="KW-0862">Zinc</keyword>
<name>YBEY_CLOD6</name>
<proteinExistence type="inferred from homology"/>
<gene>
    <name evidence="1" type="primary">ybeY</name>
    <name type="ordered locus">CD630_24400</name>
</gene>
<organism>
    <name type="scientific">Clostridioides difficile (strain 630)</name>
    <name type="common">Peptoclostridium difficile</name>
    <dbReference type="NCBI Taxonomy" id="272563"/>
    <lineage>
        <taxon>Bacteria</taxon>
        <taxon>Bacillati</taxon>
        <taxon>Bacillota</taxon>
        <taxon>Clostridia</taxon>
        <taxon>Peptostreptococcales</taxon>
        <taxon>Peptostreptococcaceae</taxon>
        <taxon>Clostridioides</taxon>
    </lineage>
</organism>
<feature type="chain" id="PRO_0000284188" description="Endoribonuclease YbeY">
    <location>
        <begin position="1"/>
        <end position="153"/>
    </location>
</feature>
<feature type="binding site" evidence="1">
    <location>
        <position position="118"/>
    </location>
    <ligand>
        <name>Zn(2+)</name>
        <dbReference type="ChEBI" id="CHEBI:29105"/>
        <note>catalytic</note>
    </ligand>
</feature>
<feature type="binding site" evidence="1">
    <location>
        <position position="122"/>
    </location>
    <ligand>
        <name>Zn(2+)</name>
        <dbReference type="ChEBI" id="CHEBI:29105"/>
        <note>catalytic</note>
    </ligand>
</feature>
<feature type="binding site" evidence="1">
    <location>
        <position position="128"/>
    </location>
    <ligand>
        <name>Zn(2+)</name>
        <dbReference type="ChEBI" id="CHEBI:29105"/>
        <note>catalytic</note>
    </ligand>
</feature>
<comment type="function">
    <text evidence="1">Single strand-specific metallo-endoribonuclease involved in late-stage 70S ribosome quality control and in maturation of the 3' terminus of the 16S rRNA.</text>
</comment>
<comment type="cofactor">
    <cofactor evidence="1">
        <name>Zn(2+)</name>
        <dbReference type="ChEBI" id="CHEBI:29105"/>
    </cofactor>
    <text evidence="1">Binds 1 zinc ion.</text>
</comment>
<comment type="subcellular location">
    <subcellularLocation>
        <location evidence="1">Cytoplasm</location>
    </subcellularLocation>
</comment>
<comment type="similarity">
    <text evidence="1">Belongs to the endoribonuclease YbeY family.</text>
</comment>
<dbReference type="EC" id="3.1.-.-" evidence="1"/>
<dbReference type="EMBL" id="AM180355">
    <property type="protein sequence ID" value="CAJ69326.1"/>
    <property type="molecule type" value="Genomic_DNA"/>
</dbReference>
<dbReference type="RefSeq" id="WP_003430894.1">
    <property type="nucleotide sequence ID" value="NZ_JAUPES010000003.1"/>
</dbReference>
<dbReference type="RefSeq" id="YP_001088953.1">
    <property type="nucleotide sequence ID" value="NC_009089.1"/>
</dbReference>
<dbReference type="SMR" id="Q182C6"/>
<dbReference type="STRING" id="272563.CD630_24400"/>
<dbReference type="EnsemblBacteria" id="CAJ69326">
    <property type="protein sequence ID" value="CAJ69326"/>
    <property type="gene ID" value="CD630_24400"/>
</dbReference>
<dbReference type="GeneID" id="66354837"/>
<dbReference type="KEGG" id="cdf:CD630_24400"/>
<dbReference type="KEGG" id="pdc:CDIF630_02684"/>
<dbReference type="PATRIC" id="fig|272563.120.peg.2576"/>
<dbReference type="eggNOG" id="COG0319">
    <property type="taxonomic scope" value="Bacteria"/>
</dbReference>
<dbReference type="OrthoDB" id="9807740at2"/>
<dbReference type="PhylomeDB" id="Q182C6"/>
<dbReference type="BioCyc" id="PDIF272563:G12WB-2593-MONOMER"/>
<dbReference type="Proteomes" id="UP000001978">
    <property type="component" value="Chromosome"/>
</dbReference>
<dbReference type="GO" id="GO:0005737">
    <property type="term" value="C:cytoplasm"/>
    <property type="evidence" value="ECO:0007669"/>
    <property type="project" value="UniProtKB-SubCell"/>
</dbReference>
<dbReference type="GO" id="GO:0004222">
    <property type="term" value="F:metalloendopeptidase activity"/>
    <property type="evidence" value="ECO:0007669"/>
    <property type="project" value="InterPro"/>
</dbReference>
<dbReference type="GO" id="GO:0004521">
    <property type="term" value="F:RNA endonuclease activity"/>
    <property type="evidence" value="ECO:0007669"/>
    <property type="project" value="UniProtKB-UniRule"/>
</dbReference>
<dbReference type="GO" id="GO:0008270">
    <property type="term" value="F:zinc ion binding"/>
    <property type="evidence" value="ECO:0007669"/>
    <property type="project" value="UniProtKB-UniRule"/>
</dbReference>
<dbReference type="GO" id="GO:0006364">
    <property type="term" value="P:rRNA processing"/>
    <property type="evidence" value="ECO:0007669"/>
    <property type="project" value="UniProtKB-UniRule"/>
</dbReference>
<dbReference type="Gene3D" id="3.40.390.30">
    <property type="entry name" value="Metalloproteases ('zincins'), catalytic domain"/>
    <property type="match status" value="1"/>
</dbReference>
<dbReference type="HAMAP" id="MF_00009">
    <property type="entry name" value="Endoribonucl_YbeY"/>
    <property type="match status" value="1"/>
</dbReference>
<dbReference type="InterPro" id="IPR023091">
    <property type="entry name" value="MetalPrtase_cat_dom_sf_prd"/>
</dbReference>
<dbReference type="InterPro" id="IPR002036">
    <property type="entry name" value="YbeY"/>
</dbReference>
<dbReference type="NCBIfam" id="TIGR00043">
    <property type="entry name" value="rRNA maturation RNase YbeY"/>
    <property type="match status" value="1"/>
</dbReference>
<dbReference type="PANTHER" id="PTHR46986">
    <property type="entry name" value="ENDORIBONUCLEASE YBEY, CHLOROPLASTIC"/>
    <property type="match status" value="1"/>
</dbReference>
<dbReference type="PANTHER" id="PTHR46986:SF1">
    <property type="entry name" value="ENDORIBONUCLEASE YBEY, CHLOROPLASTIC"/>
    <property type="match status" value="1"/>
</dbReference>
<dbReference type="Pfam" id="PF02130">
    <property type="entry name" value="YbeY"/>
    <property type="match status" value="1"/>
</dbReference>
<dbReference type="SUPFAM" id="SSF55486">
    <property type="entry name" value="Metalloproteases ('zincins'), catalytic domain"/>
    <property type="match status" value="1"/>
</dbReference>
<sequence length="153" mass="18207">MDLILDDRQDKLEVSEELIEKIKDIIIECLDYEGYDDNYEVSLSFVDNKEIHELNREYRGVDRVTDVLSFPLLSDDFEDVELEEESLGDIVVSLERALEQSIEYNHSFEREVCFLICHSMFHLLGYDHDTDENTKEMREKEEHILNKLNITRE</sequence>
<evidence type="ECO:0000255" key="1">
    <source>
        <dbReference type="HAMAP-Rule" id="MF_00009"/>
    </source>
</evidence>
<accession>Q182C6</accession>
<reference key="1">
    <citation type="journal article" date="2006" name="Nat. Genet.">
        <title>The multidrug-resistant human pathogen Clostridium difficile has a highly mobile, mosaic genome.</title>
        <authorList>
            <person name="Sebaihia M."/>
            <person name="Wren B.W."/>
            <person name="Mullany P."/>
            <person name="Fairweather N.F."/>
            <person name="Minton N."/>
            <person name="Stabler R."/>
            <person name="Thomson N.R."/>
            <person name="Roberts A.P."/>
            <person name="Cerdeno-Tarraga A.M."/>
            <person name="Wang H."/>
            <person name="Holden M.T.G."/>
            <person name="Wright A."/>
            <person name="Churcher C."/>
            <person name="Quail M.A."/>
            <person name="Baker S."/>
            <person name="Bason N."/>
            <person name="Brooks K."/>
            <person name="Chillingworth T."/>
            <person name="Cronin A."/>
            <person name="Davis P."/>
            <person name="Dowd L."/>
            <person name="Fraser A."/>
            <person name="Feltwell T."/>
            <person name="Hance Z."/>
            <person name="Holroyd S."/>
            <person name="Jagels K."/>
            <person name="Moule S."/>
            <person name="Mungall K."/>
            <person name="Price C."/>
            <person name="Rabbinowitsch E."/>
            <person name="Sharp S."/>
            <person name="Simmonds M."/>
            <person name="Stevens K."/>
            <person name="Unwin L."/>
            <person name="Whithead S."/>
            <person name="Dupuy B."/>
            <person name="Dougan G."/>
            <person name="Barrell B."/>
            <person name="Parkhill J."/>
        </authorList>
    </citation>
    <scope>NUCLEOTIDE SEQUENCE [LARGE SCALE GENOMIC DNA]</scope>
    <source>
        <strain>630</strain>
    </source>
</reference>